<name>PRS35_RAT</name>
<gene>
    <name type="primary">Prss35</name>
</gene>
<keyword id="KW-1015">Disulfide bond</keyword>
<keyword id="KW-0325">Glycoprotein</keyword>
<keyword id="KW-1185">Reference proteome</keyword>
<keyword id="KW-0964">Secreted</keyword>
<keyword id="KW-0721">Serine protease homolog</keyword>
<keyword id="KW-0732">Signal</keyword>
<dbReference type="EMBL" id="AB180912">
    <property type="protein sequence ID" value="BAD74162.1"/>
    <property type="molecule type" value="mRNA"/>
</dbReference>
<dbReference type="RefSeq" id="NP_001008560.1">
    <property type="nucleotide sequence ID" value="NM_001008560.1"/>
</dbReference>
<dbReference type="FunCoup" id="Q5R212">
    <property type="interactions" value="429"/>
</dbReference>
<dbReference type="STRING" id="10116.ENSRNOP00000036136"/>
<dbReference type="GlyCosmos" id="Q5R212">
    <property type="glycosylation" value="1 site, No reported glycans"/>
</dbReference>
<dbReference type="GlyGen" id="Q5R212">
    <property type="glycosylation" value="2 sites"/>
</dbReference>
<dbReference type="iPTMnet" id="Q5R212"/>
<dbReference type="PhosphoSitePlus" id="Q5R212"/>
<dbReference type="PaxDb" id="10116-ENSRNOP00000036136"/>
<dbReference type="GeneID" id="315866"/>
<dbReference type="KEGG" id="rno:315866"/>
<dbReference type="UCSC" id="RGD:1311282">
    <property type="organism name" value="rat"/>
</dbReference>
<dbReference type="AGR" id="RGD:1311282"/>
<dbReference type="CTD" id="167681"/>
<dbReference type="RGD" id="1311282">
    <property type="gene designation" value="Prss35"/>
</dbReference>
<dbReference type="eggNOG" id="ENOG502QV0K">
    <property type="taxonomic scope" value="Eukaryota"/>
</dbReference>
<dbReference type="InParanoid" id="Q5R212"/>
<dbReference type="OrthoDB" id="10037376at2759"/>
<dbReference type="PhylomeDB" id="Q5R212"/>
<dbReference type="PRO" id="PR:Q5R212"/>
<dbReference type="Proteomes" id="UP000002494">
    <property type="component" value="Unplaced"/>
</dbReference>
<dbReference type="GO" id="GO:0005576">
    <property type="term" value="C:extracellular region"/>
    <property type="evidence" value="ECO:0007669"/>
    <property type="project" value="UniProtKB-SubCell"/>
</dbReference>
<dbReference type="Gene3D" id="2.40.10.10">
    <property type="entry name" value="Trypsin-like serine proteases"/>
    <property type="match status" value="1"/>
</dbReference>
<dbReference type="InterPro" id="IPR050966">
    <property type="entry name" value="Glutamyl_endopeptidase"/>
</dbReference>
<dbReference type="InterPro" id="IPR009003">
    <property type="entry name" value="Peptidase_S1_PA"/>
</dbReference>
<dbReference type="InterPro" id="IPR043504">
    <property type="entry name" value="Peptidase_S1_PA_chymotrypsin"/>
</dbReference>
<dbReference type="InterPro" id="IPR001254">
    <property type="entry name" value="Trypsin_dom"/>
</dbReference>
<dbReference type="InterPro" id="IPR018114">
    <property type="entry name" value="TRYPSIN_HIS"/>
</dbReference>
<dbReference type="PANTHER" id="PTHR15462:SF17">
    <property type="entry name" value="INACTIVE SERINE PROTEASE 35"/>
    <property type="match status" value="1"/>
</dbReference>
<dbReference type="PANTHER" id="PTHR15462">
    <property type="entry name" value="SERINE PROTEASE"/>
    <property type="match status" value="1"/>
</dbReference>
<dbReference type="Pfam" id="PF00089">
    <property type="entry name" value="Trypsin"/>
    <property type="match status" value="1"/>
</dbReference>
<dbReference type="SUPFAM" id="SSF50494">
    <property type="entry name" value="Trypsin-like serine proteases"/>
    <property type="match status" value="1"/>
</dbReference>
<dbReference type="PROSITE" id="PS00134">
    <property type="entry name" value="TRYPSIN_HIS"/>
    <property type="match status" value="1"/>
</dbReference>
<organism>
    <name type="scientific">Rattus norvegicus</name>
    <name type="common">Rat</name>
    <dbReference type="NCBI Taxonomy" id="10116"/>
    <lineage>
        <taxon>Eukaryota</taxon>
        <taxon>Metazoa</taxon>
        <taxon>Chordata</taxon>
        <taxon>Craniata</taxon>
        <taxon>Vertebrata</taxon>
        <taxon>Euteleostomi</taxon>
        <taxon>Mammalia</taxon>
        <taxon>Eutheria</taxon>
        <taxon>Euarchontoglires</taxon>
        <taxon>Glires</taxon>
        <taxon>Rodentia</taxon>
        <taxon>Myomorpha</taxon>
        <taxon>Muroidea</taxon>
        <taxon>Muridae</taxon>
        <taxon>Murinae</taxon>
        <taxon>Rattus</taxon>
    </lineage>
</organism>
<evidence type="ECO:0000250" key="1"/>
<evidence type="ECO:0000255" key="2"/>
<evidence type="ECO:0000256" key="3">
    <source>
        <dbReference type="SAM" id="MobiDB-lite"/>
    </source>
</evidence>
<evidence type="ECO:0000305" key="4"/>
<reference key="1">
    <citation type="submission" date="2004-06" db="EMBL/GenBank/DDBJ databases">
        <title>Rat novel serine protease.</title>
        <authorList>
            <person name="Yoshino M."/>
            <person name="Mizutani T."/>
            <person name="Yamada K."/>
            <person name="Yazawa T."/>
            <person name="Ogata H."/>
            <person name="Sekiguchi T."/>
            <person name="Kajitani T."/>
            <person name="Miyamoto K."/>
        </authorList>
    </citation>
    <scope>NUCLEOTIDE SEQUENCE [MRNA]</scope>
</reference>
<feature type="signal peptide" evidence="2">
    <location>
        <begin position="1"/>
        <end position="17"/>
    </location>
</feature>
<feature type="chain" id="PRO_0000299361" description="Inactive serine protease 35">
    <location>
        <begin position="18"/>
        <end position="406"/>
    </location>
</feature>
<feature type="domain" description="Peptidase S1">
    <location>
        <begin position="121"/>
        <end position="401"/>
    </location>
</feature>
<feature type="region of interest" description="Disordered" evidence="3">
    <location>
        <begin position="186"/>
        <end position="248"/>
    </location>
</feature>
<feature type="compositionally biased region" description="Basic residues" evidence="3">
    <location>
        <begin position="186"/>
        <end position="204"/>
    </location>
</feature>
<feature type="glycosylation site" description="N-linked (GlcNAc...) asparagine" evidence="2">
    <location>
        <position position="87"/>
    </location>
</feature>
<feature type="disulfide bond" evidence="1">
    <location>
        <begin position="151"/>
        <end position="167"/>
    </location>
</feature>
<protein>
    <recommendedName>
        <fullName>Inactive serine protease 35</fullName>
    </recommendedName>
</protein>
<proteinExistence type="evidence at transcript level"/>
<accession>Q5R212</accession>
<sequence>MLLWLIIFVSGWTLSLGSETEPDFTWHLSRIPQVVSEKTIHLASPTFQADAAAVKATVCGIECQEELPAPSLSQLEDFLSYETVFENGTRTLTRVKVQGLVLEPTQNSSIKGARPRRRRQVYGTDSRFSILDKRFLTNFPFNTAVKLSTGCSGALVSPNHVLTAAHCVHDGKDYVKGSKKLRVGVLKMRNKGGRKKRRGSRRSRREAESGGQSPEHPQESTTQRPGKKSRRGPRVAQGRPSFQWTRVKSTHIPKGWARGENGDPALDFDYALLELKRAQKQQYMELGVSPTISKLPGGRIHFSGFDNDRDDQLVYRFCSVSEESNDLLYQYCDAEAGSTGSGIYLRLKEPGQKNWKRKIIAVYSGHQWVDVHGVQKDYNVAVRITPLKYAQICLWIHGNAANCAYG</sequence>
<comment type="subcellular location">
    <subcellularLocation>
        <location evidence="4">Secreted</location>
    </subcellularLocation>
</comment>
<comment type="similarity">
    <text evidence="4">Belongs to the peptidase S1 family.</text>
</comment>
<comment type="caution">
    <text evidence="4">Although related to peptidase S1 family, lacks the conserved active Ser residue in position 339 which is replaced by a Thr, suggesting that it has no protease activity.</text>
</comment>